<name>PTK6_MOUSE</name>
<feature type="chain" id="PRO_0000088134" description="Protein-tyrosine kinase 6">
    <location>
        <begin position="1"/>
        <end position="451"/>
    </location>
</feature>
<feature type="domain" description="SH3" evidence="5">
    <location>
        <begin position="8"/>
        <end position="72"/>
    </location>
</feature>
<feature type="domain" description="SH2" evidence="4">
    <location>
        <begin position="78"/>
        <end position="170"/>
    </location>
</feature>
<feature type="domain" description="Protein kinase" evidence="3">
    <location>
        <begin position="191"/>
        <end position="445"/>
    </location>
</feature>
<feature type="region of interest" description="Linker">
    <location>
        <begin position="171"/>
        <end position="190"/>
    </location>
</feature>
<feature type="active site" description="Proton acceptor" evidence="3 6">
    <location>
        <position position="312"/>
    </location>
</feature>
<feature type="binding site" evidence="3">
    <location>
        <begin position="197"/>
        <end position="205"/>
    </location>
    <ligand>
        <name>ATP</name>
        <dbReference type="ChEBI" id="CHEBI:30616"/>
    </ligand>
</feature>
<feature type="binding site" evidence="3">
    <location>
        <position position="219"/>
    </location>
    <ligand>
        <name>ATP</name>
        <dbReference type="ChEBI" id="CHEBI:30616"/>
    </ligand>
</feature>
<feature type="modified residue" description="Phosphotyrosine" evidence="2">
    <location>
        <position position="13"/>
    </location>
</feature>
<feature type="modified residue" description="Phosphotyrosine" evidence="2">
    <location>
        <position position="61"/>
    </location>
</feature>
<feature type="modified residue" description="Phosphotyrosine" evidence="2">
    <location>
        <position position="66"/>
    </location>
</feature>
<feature type="modified residue" description="Phosphotyrosine" evidence="2">
    <location>
        <position position="114"/>
    </location>
</feature>
<feature type="modified residue" description="Phosphotyrosine; by autocatalysis" evidence="2">
    <location>
        <position position="342"/>
    </location>
</feature>
<feature type="modified residue" description="Phosphotyrosine" evidence="2">
    <location>
        <position position="351"/>
    </location>
</feature>
<feature type="modified residue" description="Phosphotyrosine" evidence="2 12">
    <location>
        <position position="447"/>
    </location>
</feature>
<feature type="mutagenesis site" description="Increase in the kinase activation level." evidence="8">
    <original>Y</original>
    <variation>F</variation>
    <location>
        <position position="447"/>
    </location>
</feature>
<reference key="1">
    <citation type="journal article" date="1995" name="Oncogene">
        <title>A novel intracellular epithelial cell tyrosine kinase is expressed in the skin and gastrointestinal tract.</title>
        <authorList>
            <person name="Vasioukhin V."/>
            <person name="Serfas M.S."/>
            <person name="Siyanova E.Y."/>
            <person name="Polonskaia M."/>
            <person name="Costigan V.J."/>
            <person name="Liu B."/>
            <person name="Thomason A."/>
            <person name="Tyner A.L."/>
        </authorList>
    </citation>
    <scope>NUCLEOTIDE SEQUENCE [MRNA]</scope>
    <source>
        <strain>BALB/cJ</strain>
        <strain>ICR</strain>
        <tissue>Intestinal crypt</tissue>
    </source>
</reference>
<reference key="2">
    <citation type="submission" date="1997-07" db="EMBL/GenBank/DDBJ databases">
        <title>Promoter region of the mouse sik gene.</title>
        <authorList>
            <person name="Siyanova E.Y."/>
        </authorList>
    </citation>
    <scope>NUCLEOTIDE SEQUENCE [GENOMIC DNA] OF 1-77</scope>
    <source>
        <strain>BALB/cJ</strain>
    </source>
</reference>
<reference key="3">
    <citation type="journal article" date="1997" name="Proc. Natl. Acad. Sci. U.S.A.">
        <title>A role for the epithelial-cell-specific tyrosine kinase Sik during keratinocyte differentiation.</title>
        <authorList>
            <person name="Vasioukhin V."/>
            <person name="Tyner A.L."/>
        </authorList>
    </citation>
    <scope>INTERACTION WITH GAP-A.P65</scope>
</reference>
<reference key="4">
    <citation type="journal article" date="1999" name="Clin. Cancer Res.">
        <title>BRK/Sik expression in the gastrointestinal tract and in colon tumors.</title>
        <authorList>
            <person name="Llor X."/>
            <person name="Serfas M.S."/>
            <person name="Bie W."/>
            <person name="Vasioukhin V."/>
            <person name="Polonskaia M."/>
            <person name="Derry J."/>
            <person name="Abbott C.M."/>
            <person name="Tyner A.L."/>
        </authorList>
    </citation>
    <scope>DEVELOPMENTAL STAGE</scope>
</reference>
<reference key="5">
    <citation type="journal article" date="2000" name="Mol. Cell. Biol.">
        <title>Sik (BRK) phosphorylates Sam68 in the nucleus and negatively regulates its RNA binding ability.</title>
        <authorList>
            <person name="Derry J.J."/>
            <person name="Richard S."/>
            <person name="Valderrama Carvajal H."/>
            <person name="Ye X."/>
            <person name="Vasioukhin V."/>
            <person name="Cochrane A.W."/>
            <person name="Chen T."/>
            <person name="Tyner A.L."/>
        </authorList>
    </citation>
    <scope>INTERACTION WITH KHDRBS1</scope>
    <scope>MUTAGENESIS OF TYR-447</scope>
    <scope>SUBCELLULAR LOCATION</scope>
    <scope>ACTIVITY REGULATION</scope>
    <scope>FUNCTION IN PHOSPHORYLATION OF KHDRBS1</scope>
</reference>
<reference key="6">
    <citation type="journal article" date="2003" name="Oncogene">
        <title>Altered localization and activity of the intracellular tyrosine kinase BRK/Sik in prostate tumor cells.</title>
        <authorList>
            <person name="Derry J.J."/>
            <person name="Prins G.S."/>
            <person name="Ray V."/>
            <person name="Tyner A.L."/>
        </authorList>
    </citation>
    <scope>SUBCELLULAR LOCATION</scope>
</reference>
<reference key="7">
    <citation type="journal article" date="2004" name="J. Biol. Chem.">
        <title>The nuclear tyrosine kinase BRK/Sik phosphorylates and inhibits the RNA-binding activities of the Sam68-like mammalian proteins SLM-1 and SLM-2.</title>
        <authorList>
            <person name="Haegebarth A."/>
            <person name="Heap D."/>
            <person name="Bie W."/>
            <person name="Derry J.J."/>
            <person name="Richard S."/>
            <person name="Tyner A.L."/>
        </authorList>
    </citation>
    <scope>TISSUE SPECIFICITY</scope>
    <scope>SUBCELLULAR LOCATION</scope>
    <scope>FUNCTION</scope>
</reference>
<reference key="8">
    <citation type="journal article" date="2006" name="Mol. Cell. Biol.">
        <title>Protein tyrosine kinase 6 negatively regulates growth and promotes enterocyte differentiation in the small intestine.</title>
        <authorList>
            <person name="Haegebarth A."/>
            <person name="Bie W."/>
            <person name="Yang R."/>
            <person name="Crawford S.E."/>
            <person name="Vasioukhin V."/>
            <person name="Fuchs E."/>
            <person name="Tyner A.L."/>
        </authorList>
    </citation>
    <scope>DISRUPTION PHENOTYPE</scope>
</reference>
<reference key="9">
    <citation type="journal article" date="2009" name="Gastroenterology">
        <title>Induction of protein tyrosine kinase 6 in mouse intestinal crypt epithelial cells promotes DNA damage-induced apoptosis.</title>
        <authorList>
            <person name="Haegebarth A."/>
            <person name="Perekatt A.O."/>
            <person name="Bie W."/>
            <person name="Gierut J.J."/>
            <person name="Tyner A.L."/>
        </authorList>
    </citation>
    <scope>FUNCTION IN APOPTOSIS</scope>
</reference>
<protein>
    <recommendedName>
        <fullName>Protein-tyrosine kinase 6</fullName>
        <ecNumber>2.7.10.2</ecNumber>
    </recommendedName>
    <alternativeName>
        <fullName>SRC-related intestinal kinase</fullName>
    </alternativeName>
</protein>
<organism>
    <name type="scientific">Mus musculus</name>
    <name type="common">Mouse</name>
    <dbReference type="NCBI Taxonomy" id="10090"/>
    <lineage>
        <taxon>Eukaryota</taxon>
        <taxon>Metazoa</taxon>
        <taxon>Chordata</taxon>
        <taxon>Craniata</taxon>
        <taxon>Vertebrata</taxon>
        <taxon>Euteleostomi</taxon>
        <taxon>Mammalia</taxon>
        <taxon>Eutheria</taxon>
        <taxon>Euarchontoglires</taxon>
        <taxon>Glires</taxon>
        <taxon>Rodentia</taxon>
        <taxon>Myomorpha</taxon>
        <taxon>Muroidea</taxon>
        <taxon>Muridae</taxon>
        <taxon>Murinae</taxon>
        <taxon>Mus</taxon>
        <taxon>Mus</taxon>
    </lineage>
</organism>
<evidence type="ECO:0000250" key="1"/>
<evidence type="ECO:0000250" key="2">
    <source>
        <dbReference type="UniProtKB" id="Q13882"/>
    </source>
</evidence>
<evidence type="ECO:0000255" key="3">
    <source>
        <dbReference type="PROSITE-ProRule" id="PRU00159"/>
    </source>
</evidence>
<evidence type="ECO:0000255" key="4">
    <source>
        <dbReference type="PROSITE-ProRule" id="PRU00191"/>
    </source>
</evidence>
<evidence type="ECO:0000255" key="5">
    <source>
        <dbReference type="PROSITE-ProRule" id="PRU00192"/>
    </source>
</evidence>
<evidence type="ECO:0000255" key="6">
    <source>
        <dbReference type="PROSITE-ProRule" id="PRU10028"/>
    </source>
</evidence>
<evidence type="ECO:0000269" key="7">
    <source>
    </source>
</evidence>
<evidence type="ECO:0000269" key="8">
    <source>
    </source>
</evidence>
<evidence type="ECO:0000269" key="9">
    <source>
    </source>
</evidence>
<evidence type="ECO:0000269" key="10">
    <source>
    </source>
</evidence>
<evidence type="ECO:0000269" key="11">
    <source>
    </source>
</evidence>
<evidence type="ECO:0000305" key="12"/>
<proteinExistence type="evidence at protein level"/>
<sequence length="451" mass="51972">MVSWDKAHLGPKYVGLWDFKARTDEELSFQAGDLLHVTKKEELWWWATLLDAEGKALAEGYVPHNYLAEKETVESEPWFFGCISRSEAMHRLQAEDNSKGAFLIRVSQKPGADYVLSVRDAQAVRHYRIWKNNEGRLHLNEAVSFSNLSELVDYHKTQSLSHGLQLSMPCWKHKTEPLPHWDDWERPREEFTLCKKLGAGYFGEVFEALWKGQVHVAVKVISRDNLLHQHTFQAEIQAMKKLRHKHILSLYAVATAGDPVYIITELMPKGNLLQLLRDSDEKALPILELVDFASQVAEGMCYLESQNYIHRDLAARNVLVTENNLCKVGDFGLARLVKEDIYLSHEHNVPYKWTAPEALSRGHYSIKSDVWSFGVLLHEIFSRGQMPYPGMSNHETFLRVDAGYRMPCPLECPPNIHKLMLSCWSRDPKQRPCFKDLCEKLTGITRYENLV</sequence>
<gene>
    <name type="primary">Ptk6</name>
    <name type="synonym">Sik</name>
</gene>
<comment type="function">
    <text evidence="2 8 9 11">Non-receptor tyrosine-protein kinase implicated in the regulation of a variety of signaling pathways that control the differentiation and maintenance of normal epithelia, as well as tumor growth. Function seems to be context dependent and differ depending on cell type, as well as its intracellular localization. A number of potential nuclear and cytoplasmic substrates have been identified. These include the RNA-binding proteins: KHDRBS1/SAM68, KHDRBS2/SLM1, KHDRBS3/SLM2 and SFPQ/PSF; transcription factors: STAT3 and STAT5A/B and a variety of signaling molecules: ARHGAP35/p190RhoGAP, PXN/paxillin, BTK/ATK, STAP2/BKS. Phosphorylates the GTPase-activating protein ARAP1 following EGF stimulation which enhances EGFR signaling by delaying EGFR down-regulation (By similarity). Also associates with a variety of proteins that are likely upstream of PTK6 in various signaling pathways, or for which PTK6 may play an adapter-like role. These proteins include ADAM15, EGFR, ERBB2, ERBB3 and IRS4. In normal or non-tumorigenic tissues, PTK6 promotes cellular differentiation and apoptosis. In tumors PTK6 contributes to cancer progression by sensitizing cells to mitogenic signals and enhancing proliferation, anchorage-independent survival and migration/invasion. Association with EGFR, ERBB2, ERBB3 may contribute to mammary tumor development and growth through enhancement of EGF-induced signaling via BTK/AKT and PI3 kinase. Contributes to migration and proliferation by contributing to EGF-mediated phosphorylation of ARHGAP35/p190RhoGAP, which promotes association with RASA1/p120RasGAP, inactivating RhoA while activating RAS. EGF stimulation resulted in phosphorylation of PNX/Paxillin by PTK6 and activation of RAC1 via CRK/CrKII, thereby promoting migration and invasion. PTK6 activates STAT3 and STAT5B to promote proliferation. Nuclear PTK6 may be important for regulating growth in normal epithelia, while cytoplasmic PTK6 might activate oncogenic signaling pathways.</text>
</comment>
<comment type="catalytic activity">
    <reaction evidence="6">
        <text>L-tyrosyl-[protein] + ATP = O-phospho-L-tyrosyl-[protein] + ADP + H(+)</text>
        <dbReference type="Rhea" id="RHEA:10596"/>
        <dbReference type="Rhea" id="RHEA-COMP:10136"/>
        <dbReference type="Rhea" id="RHEA-COMP:20101"/>
        <dbReference type="ChEBI" id="CHEBI:15378"/>
        <dbReference type="ChEBI" id="CHEBI:30616"/>
        <dbReference type="ChEBI" id="CHEBI:46858"/>
        <dbReference type="ChEBI" id="CHEBI:61978"/>
        <dbReference type="ChEBI" id="CHEBI:456216"/>
        <dbReference type="EC" id="2.7.10.2"/>
    </reaction>
</comment>
<comment type="activity regulation">
    <text evidence="8">Activated by EGF, NRG1 and IGF1. Inhibited by SOCS3 to phosphorylate STAT3. Stabilized in the inactive form by an association between the SH3 domain and the SH2-TK linker region. Interaction between Trp-184 within SH2-TK linker region and the catalytic domain appears essential for positive regulation of kinase activity.</text>
</comment>
<comment type="subunit">
    <text evidence="1">Interacts with KHDRBS1. Interacts with phosphorylated IRS4 (By similarity). Interacts with GAP-A.p65. Interacts with ADAM15 (By similarity). Interacts (via SH3 and SH2 domains) with phosphorylated IRS4 (By similarity). Interacts (via SH3 domain) with SFPQ (By similarity). Interacts with EGFR and ERBB2 (By similarity). Interacts with STAP2 (By similarity). Interacts with PNX (By similarity). Interacts with SFPQ (By similarity). Interacts with PTK/ATK (By similarity). Interacts with CTNNB1 (By similarity).</text>
</comment>
<comment type="subcellular location">
    <subcellularLocation>
        <location>Cytoplasm</location>
    </subcellularLocation>
    <subcellularLocation>
        <location>Nucleus</location>
    </subcellularLocation>
    <subcellularLocation>
        <location>Membrane</location>
    </subcellularLocation>
    <subcellularLocation>
        <location evidence="1">Cell projection</location>
        <location evidence="1">Ruffle</location>
    </subcellularLocation>
    <text>Also found to be membrane-associated. Colocalizes with KHDRBS1, within the nucleus.</text>
</comment>
<comment type="tissue specificity">
    <text evidence="9">Expressed only in epithelial tissues, including the skin and lining of the alimentary canal. Restricted to the cell layers immediately above the proliferative cell zone in these epithelia.</text>
</comment>
<comment type="developmental stage">
    <text evidence="7">First detected at day 15.5 of gestation in the embryo, where it is expressed in the newly forming granular layer of the skin. Is found in stomach at day 17.5.</text>
</comment>
<comment type="domain">
    <text evidence="1">The SH3 domain plays a major role in substrate interactions. The SH2 domain of PTK6 plays a role in protein-protein interactions, but is likely more important for the regulation of catalytic activity (By similarity).</text>
</comment>
<comment type="PTM">
    <text evidence="1">Autophosphorylated. Autophosphorylation of Tyr-342 leads to an increase of kinase activity. Tyr-447 binds to the SH2 domain when phosphorylated and negatively regulates kinase activity (By similarity).</text>
</comment>
<comment type="disruption phenotype">
    <text evidence="10">Deficient mice have an increased cell turnover in the small intestine, which is accompanied by increased villus length and crypt depth and delayed enterocyte differentiation that is accompanied by increased PTK/AKT and WNT signaling.</text>
</comment>
<comment type="similarity">
    <text evidence="3">Belongs to the protein kinase superfamily. Tyr protein kinase family. BRK/PTK6/SIK subfamily.</text>
</comment>
<keyword id="KW-0067">ATP-binding</keyword>
<keyword id="KW-0966">Cell projection</keyword>
<keyword id="KW-0963">Cytoplasm</keyword>
<keyword id="KW-0418">Kinase</keyword>
<keyword id="KW-0472">Membrane</keyword>
<keyword id="KW-0547">Nucleotide-binding</keyword>
<keyword id="KW-0539">Nucleus</keyword>
<keyword id="KW-0597">Phosphoprotein</keyword>
<keyword id="KW-1185">Reference proteome</keyword>
<keyword id="KW-0727">SH2 domain</keyword>
<keyword id="KW-0728">SH3 domain</keyword>
<keyword id="KW-0808">Transferase</keyword>
<keyword id="KW-0829">Tyrosine-protein kinase</keyword>
<accession>Q64434</accession>
<dbReference type="EC" id="2.7.10.2"/>
<dbReference type="EMBL" id="U16805">
    <property type="protein sequence ID" value="AAA67929.1"/>
    <property type="molecule type" value="mRNA"/>
</dbReference>
<dbReference type="EMBL" id="AF016545">
    <property type="protein sequence ID" value="AAB94550.1"/>
    <property type="molecule type" value="Genomic_DNA"/>
</dbReference>
<dbReference type="CCDS" id="CCDS17203.1"/>
<dbReference type="RefSeq" id="NP_033210.1">
    <property type="nucleotide sequence ID" value="NM_009184.2"/>
</dbReference>
<dbReference type="SMR" id="Q64434"/>
<dbReference type="BioGRID" id="203249">
    <property type="interactions" value="2"/>
</dbReference>
<dbReference type="FunCoup" id="Q64434">
    <property type="interactions" value="143"/>
</dbReference>
<dbReference type="IntAct" id="Q64434">
    <property type="interactions" value="1"/>
</dbReference>
<dbReference type="MINT" id="Q64434"/>
<dbReference type="STRING" id="10090.ENSMUSP00000016511"/>
<dbReference type="iPTMnet" id="Q64434"/>
<dbReference type="PhosphoSitePlus" id="Q64434"/>
<dbReference type="PaxDb" id="10090-ENSMUSP00000016511"/>
<dbReference type="ProteomicsDB" id="301933"/>
<dbReference type="Antibodypedia" id="29774">
    <property type="antibodies" value="543 antibodies from 38 providers"/>
</dbReference>
<dbReference type="DNASU" id="20459"/>
<dbReference type="Ensembl" id="ENSMUST00000016511.6">
    <property type="protein sequence ID" value="ENSMUSP00000016511.6"/>
    <property type="gene ID" value="ENSMUSG00000038751.6"/>
</dbReference>
<dbReference type="GeneID" id="20459"/>
<dbReference type="KEGG" id="mmu:20459"/>
<dbReference type="UCSC" id="uc008olk.1">
    <property type="organism name" value="mouse"/>
</dbReference>
<dbReference type="AGR" id="MGI:99683"/>
<dbReference type="CTD" id="5753"/>
<dbReference type="MGI" id="MGI:99683">
    <property type="gene designation" value="Ptk6"/>
</dbReference>
<dbReference type="VEuPathDB" id="HostDB:ENSMUSG00000038751"/>
<dbReference type="eggNOG" id="KOG0197">
    <property type="taxonomic scope" value="Eukaryota"/>
</dbReference>
<dbReference type="GeneTree" id="ENSGT00940000161218"/>
<dbReference type="HOGENOM" id="CLU_000288_7_2_1"/>
<dbReference type="InParanoid" id="Q64434"/>
<dbReference type="OMA" id="LWKGQVR"/>
<dbReference type="OrthoDB" id="4062651at2759"/>
<dbReference type="PhylomeDB" id="Q64434"/>
<dbReference type="TreeFam" id="TF351634"/>
<dbReference type="BRENDA" id="2.7.10.2">
    <property type="organism ID" value="3474"/>
</dbReference>
<dbReference type="Reactome" id="R-MMU-187577">
    <property type="pathway name" value="SCF(Skp2)-mediated degradation of p27/p21"/>
</dbReference>
<dbReference type="Reactome" id="R-MMU-69231">
    <property type="pathway name" value="Cyclin D associated events in G1"/>
</dbReference>
<dbReference type="Reactome" id="R-MMU-8847993">
    <property type="pathway name" value="ERBB2 Activates PTK6 Signaling"/>
</dbReference>
<dbReference type="Reactome" id="R-MMU-8849468">
    <property type="pathway name" value="PTK6 Regulates Proteins Involved in RNA Processing"/>
</dbReference>
<dbReference type="Reactome" id="R-MMU-8849469">
    <property type="pathway name" value="PTK6 Regulates RTKs and Their Effectors AKT1 and DOK1"/>
</dbReference>
<dbReference type="Reactome" id="R-MMU-8849470">
    <property type="pathway name" value="PTK6 Regulates Cell Cycle"/>
</dbReference>
<dbReference type="Reactome" id="R-MMU-8849471">
    <property type="pathway name" value="PTK6 Regulates RHO GTPases, RAS GTPase and MAP kinases"/>
</dbReference>
<dbReference type="Reactome" id="R-MMU-8849472">
    <property type="pathway name" value="PTK6 Down-Regulation"/>
</dbReference>
<dbReference type="Reactome" id="R-MMU-8849474">
    <property type="pathway name" value="PTK6 Activates STAT3"/>
</dbReference>
<dbReference type="Reactome" id="R-MMU-8857538">
    <property type="pathway name" value="PTK6 promotes HIF1A stabilization"/>
</dbReference>
<dbReference type="BioGRID-ORCS" id="20459">
    <property type="hits" value="1 hit in 79 CRISPR screens"/>
</dbReference>
<dbReference type="ChiTaRS" id="Nop58">
    <property type="organism name" value="mouse"/>
</dbReference>
<dbReference type="PRO" id="PR:Q64434"/>
<dbReference type="Proteomes" id="UP000000589">
    <property type="component" value="Chromosome 2"/>
</dbReference>
<dbReference type="RNAct" id="Q64434">
    <property type="molecule type" value="protein"/>
</dbReference>
<dbReference type="Bgee" id="ENSMUSG00000038751">
    <property type="expression patterns" value="Expressed in jejunum and 38 other cell types or tissues"/>
</dbReference>
<dbReference type="ExpressionAtlas" id="Q64434">
    <property type="expression patterns" value="baseline and differential"/>
</dbReference>
<dbReference type="GO" id="GO:0005829">
    <property type="term" value="C:cytosol"/>
    <property type="evidence" value="ECO:0000304"/>
    <property type="project" value="Reactome"/>
</dbReference>
<dbReference type="GO" id="GO:0016604">
    <property type="term" value="C:nuclear body"/>
    <property type="evidence" value="ECO:0007669"/>
    <property type="project" value="Ensembl"/>
</dbReference>
<dbReference type="GO" id="GO:0005634">
    <property type="term" value="C:nucleus"/>
    <property type="evidence" value="ECO:0000314"/>
    <property type="project" value="MGI"/>
</dbReference>
<dbReference type="GO" id="GO:0005886">
    <property type="term" value="C:plasma membrane"/>
    <property type="evidence" value="ECO:0007669"/>
    <property type="project" value="Ensembl"/>
</dbReference>
<dbReference type="GO" id="GO:0001726">
    <property type="term" value="C:ruffle"/>
    <property type="evidence" value="ECO:0007669"/>
    <property type="project" value="UniProtKB-SubCell"/>
</dbReference>
<dbReference type="GO" id="GO:0005524">
    <property type="term" value="F:ATP binding"/>
    <property type="evidence" value="ECO:0007669"/>
    <property type="project" value="UniProtKB-KW"/>
</dbReference>
<dbReference type="GO" id="GO:0042802">
    <property type="term" value="F:identical protein binding"/>
    <property type="evidence" value="ECO:0007669"/>
    <property type="project" value="Ensembl"/>
</dbReference>
<dbReference type="GO" id="GO:0004715">
    <property type="term" value="F:non-membrane spanning protein tyrosine kinase activity"/>
    <property type="evidence" value="ECO:0007669"/>
    <property type="project" value="UniProtKB-EC"/>
</dbReference>
<dbReference type="GO" id="GO:0016477">
    <property type="term" value="P:cell migration"/>
    <property type="evidence" value="ECO:0007669"/>
    <property type="project" value="Ensembl"/>
</dbReference>
<dbReference type="GO" id="GO:0071300">
    <property type="term" value="P:cellular response to retinoic acid"/>
    <property type="evidence" value="ECO:0007669"/>
    <property type="project" value="Ensembl"/>
</dbReference>
<dbReference type="GO" id="GO:0060575">
    <property type="term" value="P:intestinal epithelial cell differentiation"/>
    <property type="evidence" value="ECO:0000315"/>
    <property type="project" value="UniProtKB"/>
</dbReference>
<dbReference type="GO" id="GO:0045926">
    <property type="term" value="P:negative regulation of growth"/>
    <property type="evidence" value="ECO:0000315"/>
    <property type="project" value="UniProtKB"/>
</dbReference>
<dbReference type="GO" id="GO:0010976">
    <property type="term" value="P:positive regulation of neuron projection development"/>
    <property type="evidence" value="ECO:0007669"/>
    <property type="project" value="Ensembl"/>
</dbReference>
<dbReference type="GO" id="GO:0046777">
    <property type="term" value="P:protein autophosphorylation"/>
    <property type="evidence" value="ECO:0000250"/>
    <property type="project" value="UniProtKB"/>
</dbReference>
<dbReference type="GO" id="GO:0007260">
    <property type="term" value="P:tyrosine phosphorylation of STAT protein"/>
    <property type="evidence" value="ECO:0000250"/>
    <property type="project" value="UniProtKB"/>
</dbReference>
<dbReference type="CDD" id="cd10358">
    <property type="entry name" value="SH2_PTK6_Brk"/>
    <property type="match status" value="1"/>
</dbReference>
<dbReference type="FunFam" id="1.10.510.10:FF:000399">
    <property type="entry name" value="Tyrosine-protein kinase"/>
    <property type="match status" value="1"/>
</dbReference>
<dbReference type="FunFam" id="2.30.30.40:FF:000229">
    <property type="entry name" value="Tyrosine-protein kinase"/>
    <property type="match status" value="1"/>
</dbReference>
<dbReference type="FunFam" id="3.30.200.20:FF:000053">
    <property type="entry name" value="Tyrosine-protein kinase"/>
    <property type="match status" value="1"/>
</dbReference>
<dbReference type="FunFam" id="3.30.505.10:FF:000074">
    <property type="entry name" value="Tyrosine-protein kinase"/>
    <property type="match status" value="1"/>
</dbReference>
<dbReference type="Gene3D" id="3.30.200.20">
    <property type="entry name" value="Phosphorylase Kinase, domain 1"/>
    <property type="match status" value="1"/>
</dbReference>
<dbReference type="Gene3D" id="3.30.505.10">
    <property type="entry name" value="SH2 domain"/>
    <property type="match status" value="1"/>
</dbReference>
<dbReference type="Gene3D" id="2.30.30.40">
    <property type="entry name" value="SH3 Domains"/>
    <property type="match status" value="1"/>
</dbReference>
<dbReference type="Gene3D" id="1.10.510.10">
    <property type="entry name" value="Transferase(Phosphotransferase) domain 1"/>
    <property type="match status" value="1"/>
</dbReference>
<dbReference type="InterPro" id="IPR011009">
    <property type="entry name" value="Kinase-like_dom_sf"/>
</dbReference>
<dbReference type="InterPro" id="IPR050198">
    <property type="entry name" value="Non-receptor_tyrosine_kinases"/>
</dbReference>
<dbReference type="InterPro" id="IPR000719">
    <property type="entry name" value="Prot_kinase_dom"/>
</dbReference>
<dbReference type="InterPro" id="IPR017441">
    <property type="entry name" value="Protein_kinase_ATP_BS"/>
</dbReference>
<dbReference type="InterPro" id="IPR035846">
    <property type="entry name" value="PTK6_SH2"/>
</dbReference>
<dbReference type="InterPro" id="IPR001245">
    <property type="entry name" value="Ser-Thr/Tyr_kinase_cat_dom"/>
</dbReference>
<dbReference type="InterPro" id="IPR000980">
    <property type="entry name" value="SH2"/>
</dbReference>
<dbReference type="InterPro" id="IPR036860">
    <property type="entry name" value="SH2_dom_sf"/>
</dbReference>
<dbReference type="InterPro" id="IPR036028">
    <property type="entry name" value="SH3-like_dom_sf"/>
</dbReference>
<dbReference type="InterPro" id="IPR001452">
    <property type="entry name" value="SH3_domain"/>
</dbReference>
<dbReference type="InterPro" id="IPR008266">
    <property type="entry name" value="Tyr_kinase_AS"/>
</dbReference>
<dbReference type="InterPro" id="IPR020635">
    <property type="entry name" value="Tyr_kinase_cat_dom"/>
</dbReference>
<dbReference type="PANTHER" id="PTHR24418">
    <property type="entry name" value="TYROSINE-PROTEIN KINASE"/>
    <property type="match status" value="1"/>
</dbReference>
<dbReference type="Pfam" id="PF07714">
    <property type="entry name" value="PK_Tyr_Ser-Thr"/>
    <property type="match status" value="1"/>
</dbReference>
<dbReference type="Pfam" id="PF00017">
    <property type="entry name" value="SH2"/>
    <property type="match status" value="1"/>
</dbReference>
<dbReference type="Pfam" id="PF00018">
    <property type="entry name" value="SH3_1"/>
    <property type="match status" value="1"/>
</dbReference>
<dbReference type="PRINTS" id="PR00401">
    <property type="entry name" value="SH2DOMAIN"/>
</dbReference>
<dbReference type="PRINTS" id="PR00452">
    <property type="entry name" value="SH3DOMAIN"/>
</dbReference>
<dbReference type="PRINTS" id="PR00109">
    <property type="entry name" value="TYRKINASE"/>
</dbReference>
<dbReference type="SMART" id="SM00252">
    <property type="entry name" value="SH2"/>
    <property type="match status" value="1"/>
</dbReference>
<dbReference type="SMART" id="SM00326">
    <property type="entry name" value="SH3"/>
    <property type="match status" value="1"/>
</dbReference>
<dbReference type="SMART" id="SM00219">
    <property type="entry name" value="TyrKc"/>
    <property type="match status" value="1"/>
</dbReference>
<dbReference type="SUPFAM" id="SSF56112">
    <property type="entry name" value="Protein kinase-like (PK-like)"/>
    <property type="match status" value="1"/>
</dbReference>
<dbReference type="SUPFAM" id="SSF55550">
    <property type="entry name" value="SH2 domain"/>
    <property type="match status" value="1"/>
</dbReference>
<dbReference type="SUPFAM" id="SSF50044">
    <property type="entry name" value="SH3-domain"/>
    <property type="match status" value="1"/>
</dbReference>
<dbReference type="PROSITE" id="PS00107">
    <property type="entry name" value="PROTEIN_KINASE_ATP"/>
    <property type="match status" value="1"/>
</dbReference>
<dbReference type="PROSITE" id="PS50011">
    <property type="entry name" value="PROTEIN_KINASE_DOM"/>
    <property type="match status" value="1"/>
</dbReference>
<dbReference type="PROSITE" id="PS00109">
    <property type="entry name" value="PROTEIN_KINASE_TYR"/>
    <property type="match status" value="1"/>
</dbReference>
<dbReference type="PROSITE" id="PS50001">
    <property type="entry name" value="SH2"/>
    <property type="match status" value="1"/>
</dbReference>
<dbReference type="PROSITE" id="PS50002">
    <property type="entry name" value="SH3"/>
    <property type="match status" value="1"/>
</dbReference>